<organism>
    <name type="scientific">Rhizobium meliloti (strain 1021)</name>
    <name type="common">Ensifer meliloti</name>
    <name type="synonym">Sinorhizobium meliloti</name>
    <dbReference type="NCBI Taxonomy" id="266834"/>
    <lineage>
        <taxon>Bacteria</taxon>
        <taxon>Pseudomonadati</taxon>
        <taxon>Pseudomonadota</taxon>
        <taxon>Alphaproteobacteria</taxon>
        <taxon>Hyphomicrobiales</taxon>
        <taxon>Rhizobiaceae</taxon>
        <taxon>Sinorhizobium/Ensifer group</taxon>
        <taxon>Sinorhizobium</taxon>
    </lineage>
</organism>
<evidence type="ECO:0000255" key="1">
    <source>
        <dbReference type="PROSITE-ProRule" id="PRU00253"/>
    </source>
</evidence>
<evidence type="ECO:0000305" key="2"/>
<feature type="chain" id="PRO_0000105719" description="Nodulation protein D 2">
    <location>
        <begin position="1"/>
        <end position="310"/>
    </location>
</feature>
<feature type="domain" description="HTH lysR-type" evidence="1">
    <location>
        <begin position="6"/>
        <end position="63"/>
    </location>
</feature>
<feature type="DNA-binding region" description="H-T-H motif" evidence="1">
    <location>
        <begin position="23"/>
        <end position="42"/>
    </location>
</feature>
<feature type="sequence variant" description="In strain: 41.">
    <original>D</original>
    <variation>E</variation>
    <location>
        <position position="88"/>
    </location>
</feature>
<feature type="sequence variant" description="In strain: 41.">
    <original>T</original>
    <variation>A</variation>
    <location>
        <position position="256"/>
    </location>
</feature>
<feature type="sequence variant" description="In strain: 41.">
    <original>P</original>
    <variation>S</variation>
    <location>
        <position position="268"/>
    </location>
</feature>
<comment type="function">
    <text>NodD regulates the expression of the nodABCFE genes which encode other nodulation proteins. NodD is also a negative regulator of its own expression. Binds flavonoids as inducers.</text>
</comment>
<comment type="miscellaneous">
    <text>There are at least three nodD genes in R.meliloti. They differ in their specificity of interaction with different flavonoids and, consequently, contribute to the nodulation of various plant host species to different extents.</text>
</comment>
<comment type="similarity">
    <text evidence="2">Belongs to the LysR transcriptional regulatory family.</text>
</comment>
<dbReference type="EMBL" id="X04474">
    <property type="protein sequence ID" value="CAA28162.1"/>
    <property type="molecule type" value="Genomic_DNA"/>
</dbReference>
<dbReference type="EMBL" id="M29367">
    <property type="protein sequence ID" value="AAA26336.1"/>
    <property type="molecule type" value="Genomic_DNA"/>
</dbReference>
<dbReference type="EMBL" id="AE006469">
    <property type="protein sequence ID" value="AAK65062.1"/>
    <property type="molecule type" value="Genomic_DNA"/>
</dbReference>
<dbReference type="PIR" id="B25788">
    <property type="entry name" value="B25788"/>
</dbReference>
<dbReference type="PIR" id="D95312">
    <property type="entry name" value="D95312"/>
</dbReference>
<dbReference type="RefSeq" id="NP_435650.1">
    <property type="nucleotide sequence ID" value="NC_003037.1"/>
</dbReference>
<dbReference type="RefSeq" id="WP_010967394.1">
    <property type="nucleotide sequence ID" value="NC_003037.1"/>
</dbReference>
<dbReference type="SMR" id="P08719"/>
<dbReference type="EnsemblBacteria" id="AAK65062">
    <property type="protein sequence ID" value="AAK65062"/>
    <property type="gene ID" value="SMa0757"/>
</dbReference>
<dbReference type="KEGG" id="sme:SMa0757"/>
<dbReference type="PATRIC" id="fig|266834.11.peg.422"/>
<dbReference type="HOGENOM" id="CLU_039613_39_0_5"/>
<dbReference type="OrthoDB" id="8339333at2"/>
<dbReference type="Proteomes" id="UP000001976">
    <property type="component" value="Plasmid pSymA"/>
</dbReference>
<dbReference type="GO" id="GO:0003677">
    <property type="term" value="F:DNA binding"/>
    <property type="evidence" value="ECO:0007669"/>
    <property type="project" value="UniProtKB-KW"/>
</dbReference>
<dbReference type="GO" id="GO:0003700">
    <property type="term" value="F:DNA-binding transcription factor activity"/>
    <property type="evidence" value="ECO:0007669"/>
    <property type="project" value="InterPro"/>
</dbReference>
<dbReference type="CDD" id="cd08462">
    <property type="entry name" value="PBP2_NodD"/>
    <property type="match status" value="1"/>
</dbReference>
<dbReference type="Gene3D" id="3.40.190.10">
    <property type="entry name" value="Periplasmic binding protein-like II"/>
    <property type="match status" value="2"/>
</dbReference>
<dbReference type="Gene3D" id="1.10.10.10">
    <property type="entry name" value="Winged helix-like DNA-binding domain superfamily/Winged helix DNA-binding domain"/>
    <property type="match status" value="1"/>
</dbReference>
<dbReference type="InterPro" id="IPR050389">
    <property type="entry name" value="LysR-type_TF"/>
</dbReference>
<dbReference type="InterPro" id="IPR005119">
    <property type="entry name" value="LysR_subst-bd"/>
</dbReference>
<dbReference type="InterPro" id="IPR037416">
    <property type="entry name" value="NodD_PBP2"/>
</dbReference>
<dbReference type="InterPro" id="IPR000847">
    <property type="entry name" value="Tscrpt_reg_HTH_LysR"/>
</dbReference>
<dbReference type="InterPro" id="IPR036388">
    <property type="entry name" value="WH-like_DNA-bd_sf"/>
</dbReference>
<dbReference type="InterPro" id="IPR036390">
    <property type="entry name" value="WH_DNA-bd_sf"/>
</dbReference>
<dbReference type="PANTHER" id="PTHR30118:SF6">
    <property type="entry name" value="HTH-TYPE TRANSCRIPTIONAL REGULATOR LEUO"/>
    <property type="match status" value="1"/>
</dbReference>
<dbReference type="PANTHER" id="PTHR30118">
    <property type="entry name" value="HTH-TYPE TRANSCRIPTIONAL REGULATOR LEUO-RELATED"/>
    <property type="match status" value="1"/>
</dbReference>
<dbReference type="Pfam" id="PF00126">
    <property type="entry name" value="HTH_1"/>
    <property type="match status" value="1"/>
</dbReference>
<dbReference type="Pfam" id="PF03466">
    <property type="entry name" value="LysR_substrate"/>
    <property type="match status" value="1"/>
</dbReference>
<dbReference type="PRINTS" id="PR00039">
    <property type="entry name" value="HTHLYSR"/>
</dbReference>
<dbReference type="SUPFAM" id="SSF53850">
    <property type="entry name" value="Periplasmic binding protein-like II"/>
    <property type="match status" value="1"/>
</dbReference>
<dbReference type="SUPFAM" id="SSF46785">
    <property type="entry name" value="Winged helix' DNA-binding domain"/>
    <property type="match status" value="1"/>
</dbReference>
<dbReference type="PROSITE" id="PS50931">
    <property type="entry name" value="HTH_LYSR"/>
    <property type="match status" value="1"/>
</dbReference>
<protein>
    <recommendedName>
        <fullName>Nodulation protein D 2</fullName>
    </recommendedName>
</protein>
<keyword id="KW-0010">Activator</keyword>
<keyword id="KW-0238">DNA-binding</keyword>
<keyword id="KW-0536">Nodulation</keyword>
<keyword id="KW-0614">Plasmid</keyword>
<keyword id="KW-1185">Reference proteome</keyword>
<keyword id="KW-0678">Repressor</keyword>
<keyword id="KW-0804">Transcription</keyword>
<keyword id="KW-0805">Transcription regulation</keyword>
<geneLocation type="plasmid">
    <name>pSymA</name>
    <name>megaplasmid 1</name>
</geneLocation>
<sequence length="310" mass="35327">MRFRGLDLNLLVALDALMTERKLTAAARRVKLSQPAMSAAIARLRTYFGDELFSMQGRELIPTPRAEALAPAVRDALLHIQLSVIAWDPINPAQSDRRFRIILSDFMTLVFFERVVERLAREAPGVSFELLPLDDDPYELLRRGDVDFLVLPDLFMSSAHPKAKLFAEALVCVGCPTNEQLLGELSFEKYMSMGHVAAQFGRALKPSFEQWLLLEHGFKRRVELVVPGFTLIPPLLPHTNRIAIIPLRLVKYFEQTIPLRIVKHPLPPLWFTEAVQWPALHNKDPGNIWMREILLQEASRSEFQGETSLE</sequence>
<name>NODD2_RHIME</name>
<proteinExistence type="inferred from homology"/>
<accession>P08719</accession>
<reference key="1">
    <citation type="journal article" date="1986" name="J. Mol. Biol.">
        <title>At least two nodD genes are necessary for efficient nodulation of alfalfa by Rhizobium meliloti.</title>
        <authorList>
            <person name="Goettfert M."/>
            <person name="Horvath B."/>
            <person name="Kondorosi E."/>
            <person name="Putnoky P."/>
            <person name="Rodriguez-Quinones F."/>
            <person name="Kondorosi A."/>
        </authorList>
    </citation>
    <scope>NUCLEOTIDE SEQUENCE [GENOMIC DNA]</scope>
    <source>
        <strain>41</strain>
    </source>
</reference>
<reference key="2">
    <citation type="journal article" date="1990" name="J. Bacteriol.">
        <title>Rhizobium meliloti nodD genes mediate host-specific activation of nodABC.</title>
        <authorList>
            <person name="Honma M.A."/>
            <person name="Asomaning M."/>
            <person name="Ausubel F.M."/>
        </authorList>
    </citation>
    <scope>NUCLEOTIDE SEQUENCE [GENOMIC DNA]</scope>
    <source>
        <strain>RCR2011 / SU47</strain>
    </source>
</reference>
<reference key="3">
    <citation type="journal article" date="2001" name="Proc. Natl. Acad. Sci. U.S.A.">
        <title>Nucleotide sequence and predicted functions of the entire Sinorhizobium meliloti pSymA megaplasmid.</title>
        <authorList>
            <person name="Barnett M.J."/>
            <person name="Fisher R.F."/>
            <person name="Jones T."/>
            <person name="Komp C."/>
            <person name="Abola A.P."/>
            <person name="Barloy-Hubler F."/>
            <person name="Bowser L."/>
            <person name="Capela D."/>
            <person name="Galibert F."/>
            <person name="Gouzy J."/>
            <person name="Gurjal M."/>
            <person name="Hong A."/>
            <person name="Huizar L."/>
            <person name="Hyman R.W."/>
            <person name="Kahn D."/>
            <person name="Kahn M.L."/>
            <person name="Kalman S."/>
            <person name="Keating D.H."/>
            <person name="Palm C."/>
            <person name="Peck M.C."/>
            <person name="Surzycki R."/>
            <person name="Wells D.H."/>
            <person name="Yeh K.-C."/>
            <person name="Davis R.W."/>
            <person name="Federspiel N.A."/>
            <person name="Long S.R."/>
        </authorList>
    </citation>
    <scope>NUCLEOTIDE SEQUENCE [LARGE SCALE GENOMIC DNA]</scope>
    <source>
        <strain>1021</strain>
    </source>
</reference>
<reference key="4">
    <citation type="journal article" date="2001" name="Science">
        <title>The composite genome of the legume symbiont Sinorhizobium meliloti.</title>
        <authorList>
            <person name="Galibert F."/>
            <person name="Finan T.M."/>
            <person name="Long S.R."/>
            <person name="Puehler A."/>
            <person name="Abola P."/>
            <person name="Ampe F."/>
            <person name="Barloy-Hubler F."/>
            <person name="Barnett M.J."/>
            <person name="Becker A."/>
            <person name="Boistard P."/>
            <person name="Bothe G."/>
            <person name="Boutry M."/>
            <person name="Bowser L."/>
            <person name="Buhrmester J."/>
            <person name="Cadieu E."/>
            <person name="Capela D."/>
            <person name="Chain P."/>
            <person name="Cowie A."/>
            <person name="Davis R.W."/>
            <person name="Dreano S."/>
            <person name="Federspiel N.A."/>
            <person name="Fisher R.F."/>
            <person name="Gloux S."/>
            <person name="Godrie T."/>
            <person name="Goffeau A."/>
            <person name="Golding B."/>
            <person name="Gouzy J."/>
            <person name="Gurjal M."/>
            <person name="Hernandez-Lucas I."/>
            <person name="Hong A."/>
            <person name="Huizar L."/>
            <person name="Hyman R.W."/>
            <person name="Jones T."/>
            <person name="Kahn D."/>
            <person name="Kahn M.L."/>
            <person name="Kalman S."/>
            <person name="Keating D.H."/>
            <person name="Kiss E."/>
            <person name="Komp C."/>
            <person name="Lelaure V."/>
            <person name="Masuy D."/>
            <person name="Palm C."/>
            <person name="Peck M.C."/>
            <person name="Pohl T.M."/>
            <person name="Portetelle D."/>
            <person name="Purnelle B."/>
            <person name="Ramsperger U."/>
            <person name="Surzycki R."/>
            <person name="Thebault P."/>
            <person name="Vandenbol M."/>
            <person name="Vorhoelter F.J."/>
            <person name="Weidner S."/>
            <person name="Wells D.H."/>
            <person name="Wong K."/>
            <person name="Yeh K.-C."/>
            <person name="Batut J."/>
        </authorList>
    </citation>
    <scope>NUCLEOTIDE SEQUENCE [LARGE SCALE GENOMIC DNA]</scope>
    <source>
        <strain>1021</strain>
    </source>
</reference>
<gene>
    <name type="primary">nodD2</name>
    <name type="ordered locus">RA0404</name>
    <name type="ORF">SMa0757</name>
</gene>